<gene>
    <name type="primary">CTSB</name>
</gene>
<sequence length="48" mass="5226">LPDTFDSRKQWPNCPTISEIRDQGSVSVEVSAEDLLSCCGFECGMGCN</sequence>
<name>CATB_COTJA</name>
<dbReference type="EC" id="3.4.22.1"/>
<dbReference type="SMR" id="P81494"/>
<dbReference type="Proteomes" id="UP000694412">
    <property type="component" value="Unplaced"/>
</dbReference>
<dbReference type="GO" id="GO:0005764">
    <property type="term" value="C:lysosome"/>
    <property type="evidence" value="ECO:0007669"/>
    <property type="project" value="UniProtKB-SubCell"/>
</dbReference>
<dbReference type="GO" id="GO:0004197">
    <property type="term" value="F:cysteine-type endopeptidase activity"/>
    <property type="evidence" value="ECO:0007669"/>
    <property type="project" value="UniProtKB-EC"/>
</dbReference>
<dbReference type="GO" id="GO:0006508">
    <property type="term" value="P:proteolysis"/>
    <property type="evidence" value="ECO:0007669"/>
    <property type="project" value="UniProtKB-KW"/>
</dbReference>
<dbReference type="Gene3D" id="1.20.5.170">
    <property type="match status" value="1"/>
</dbReference>
<dbReference type="InterPro" id="IPR038765">
    <property type="entry name" value="Papain-like_cys_pep_sf"/>
</dbReference>
<dbReference type="SUPFAM" id="SSF54001">
    <property type="entry name" value="Cysteine proteinases"/>
    <property type="match status" value="1"/>
</dbReference>
<proteinExistence type="evidence at protein level"/>
<keyword id="KW-0903">Direct protein sequencing</keyword>
<keyword id="KW-1015">Disulfide bond</keyword>
<keyword id="KW-0378">Hydrolase</keyword>
<keyword id="KW-0458">Lysosome</keyword>
<keyword id="KW-0645">Protease</keyword>
<keyword id="KW-1185">Reference proteome</keyword>
<keyword id="KW-0788">Thiol protease</keyword>
<comment type="function">
    <text>Thiol protease which is believed to participate in intracellular degradation and turnover of proteins. Has also been implicated in tumor invasion and metastasis.</text>
</comment>
<comment type="catalytic activity">
    <reaction>
        <text>Hydrolysis of proteins with broad specificity for peptide bonds. Preferentially cleaves -Arg-Arg-|-Xaa bonds in small molecule substrates (thus differing from cathepsin L). In addition to being an endopeptidase, shows peptidyl-dipeptidase activity, liberating C-terminal dipeptides.</text>
        <dbReference type="EC" id="3.4.22.1"/>
    </reaction>
</comment>
<comment type="subunit">
    <text>Dimer of a heavy chain and a light chain cross-linked by a disulfide bond.</text>
</comment>
<comment type="subcellular location">
    <subcellularLocation>
        <location>Lysosome</location>
    </subcellularLocation>
</comment>
<comment type="similarity">
    <text evidence="1 2 3">Belongs to the peptidase C1 family.</text>
</comment>
<reference key="1">
    <citation type="journal article" date="1997" name="Comp. Biochem. Physiol.">
        <title>Proteolytic enzymes in yolk-sac membrane of quail egg. Purification and enzymatic characterisation.</title>
        <authorList>
            <person name="Gerhartz B."/>
            <person name="Auerswald E.A."/>
            <person name="Mentele R."/>
            <person name="Fritz H."/>
            <person name="Machleidt W."/>
            <person name="Kolb H.J."/>
            <person name="Wittmann J."/>
        </authorList>
    </citation>
    <scope>PROTEIN SEQUENCE</scope>
</reference>
<protein>
    <recommendedName>
        <fullName>Cathepsin B</fullName>
        <ecNumber>3.4.22.1</ecNumber>
    </recommendedName>
    <alternativeName>
        <fullName>Cathepsin B1</fullName>
    </alternativeName>
    <component>
        <recommendedName>
            <fullName>Cathepsin B light chain</fullName>
        </recommendedName>
    </component>
    <component>
        <recommendedName>
            <fullName>Cathepsin B heavy chain</fullName>
        </recommendedName>
    </component>
</protein>
<organism>
    <name type="scientific">Coturnix japonica</name>
    <name type="common">Japanese quail</name>
    <name type="synonym">Coturnix coturnix japonica</name>
    <dbReference type="NCBI Taxonomy" id="93934"/>
    <lineage>
        <taxon>Eukaryota</taxon>
        <taxon>Metazoa</taxon>
        <taxon>Chordata</taxon>
        <taxon>Craniata</taxon>
        <taxon>Vertebrata</taxon>
        <taxon>Euteleostomi</taxon>
        <taxon>Archelosauria</taxon>
        <taxon>Archosauria</taxon>
        <taxon>Dinosauria</taxon>
        <taxon>Saurischia</taxon>
        <taxon>Theropoda</taxon>
        <taxon>Coelurosauria</taxon>
        <taxon>Aves</taxon>
        <taxon>Neognathae</taxon>
        <taxon>Galloanserae</taxon>
        <taxon>Galliformes</taxon>
        <taxon>Phasianidae</taxon>
        <taxon>Perdicinae</taxon>
        <taxon>Coturnix</taxon>
    </lineage>
</organism>
<feature type="chain" id="PRO_0000026162" description="Cathepsin B">
    <location>
        <begin position="1"/>
        <end position="25" status="greater than"/>
    </location>
</feature>
<feature type="chain" id="PRO_0000409492" description="Cathepsin B light chain">
    <location>
        <begin position="1"/>
        <end position="25" status="greater than"/>
    </location>
</feature>
<feature type="chain" id="PRO_0000026163" description="Cathepsin B heavy chain">
    <location>
        <begin position="26"/>
        <end position="48" status="greater than"/>
    </location>
</feature>
<feature type="non-consecutive residues" evidence="4">
    <location>
        <begin position="25"/>
        <end position="26"/>
    </location>
</feature>
<feature type="non-terminal residue">
    <location>
        <position position="48"/>
    </location>
</feature>
<accession>P81494</accession>
<evidence type="ECO:0000255" key="1">
    <source>
        <dbReference type="PROSITE-ProRule" id="PRU10088"/>
    </source>
</evidence>
<evidence type="ECO:0000255" key="2">
    <source>
        <dbReference type="PROSITE-ProRule" id="PRU10089"/>
    </source>
</evidence>
<evidence type="ECO:0000255" key="3">
    <source>
        <dbReference type="PROSITE-ProRule" id="PRU10090"/>
    </source>
</evidence>
<evidence type="ECO:0000305" key="4"/>